<organism>
    <name type="scientific">Homo sapiens</name>
    <name type="common">Human</name>
    <dbReference type="NCBI Taxonomy" id="9606"/>
    <lineage>
        <taxon>Eukaryota</taxon>
        <taxon>Metazoa</taxon>
        <taxon>Chordata</taxon>
        <taxon>Craniata</taxon>
        <taxon>Vertebrata</taxon>
        <taxon>Euteleostomi</taxon>
        <taxon>Mammalia</taxon>
        <taxon>Eutheria</taxon>
        <taxon>Euarchontoglires</taxon>
        <taxon>Primates</taxon>
        <taxon>Haplorrhini</taxon>
        <taxon>Catarrhini</taxon>
        <taxon>Hominidae</taxon>
        <taxon>Homo</taxon>
    </lineage>
</organism>
<keyword id="KW-0002">3D-structure</keyword>
<keyword id="KW-0007">Acetylation</keyword>
<keyword id="KW-0025">Alternative splicing</keyword>
<keyword id="KW-0898">Cataract</keyword>
<keyword id="KW-0225">Disease variant</keyword>
<keyword id="KW-1013">Microphthalmia</keyword>
<keyword id="KW-0509">mRNA transport</keyword>
<keyword id="KW-0906">Nuclear pore complex</keyword>
<keyword id="KW-0539">Nucleus</keyword>
<keyword id="KW-0597">Phosphoprotein</keyword>
<keyword id="KW-0653">Protein transport</keyword>
<keyword id="KW-1267">Proteomics identification</keyword>
<keyword id="KW-1185">Reference proteome</keyword>
<keyword id="KW-0811">Translocation</keyword>
<keyword id="KW-0813">Transport</keyword>
<sequence>MAAAAGGPCVRSSRELWTILLGRSALRELSQIEAELNKHWRRLLEGLSYYKPPSPSSAEKVKANKDVASPLKELGLRISKFLGLDEEQSVQLLQCYLQEDYRGTRDSVKTVLQDERQSQALILKIADYYYEERTCILRCVLHLLTYFQDERHPYRVEYADCVDKLEKELVSKYRQQFEELYKTEAPTWETHGNLMTERQVSRWFVQCLREQSMLLEIIFLYYAYFEMAPSDLLVLTKMFKEQGFGSRQTNRHLVDETMDPFVDRIGYFSALILVEGMDIESLHKCALDDRRELHQFAQDGLICQDMDCLMLTFGDIPHHAPVLLAWALLRHTLNPEETSSVVRKIGGTAIQLNVFQYLTRLLQSLASGGNDCTTSTACMCVYGLLSFVLTSLELHTLGNQQDIIDTACEVLADPSLPELFWGTEPTSGLGIILDSVCGMFPHLLSPLLQLLRALVSGKSTAKKVYSFLDKMSFYNELYKHKPHDVISHEDGTLWRRQTPKLLYPLGGQTNLRIPQGTVGQVMLDDRAYLVRWEYSYSSWTLFTCEIEMLLHVVSTADVIQHCQRVKPIIDLVHKVISTDLSIADCLLPITSRIYMLLQRLTTVISPPVDVIASCVNCLTVLAARNPAKVWTDLRHTGFLPFVAHPVSSLSQMISAEGMNAGGYGNLLMNSEQPQGEYGVTIAFLRLITTLVKGQLGSTQSQGLVPCVMFVLKEMLPSYHKWRYNSHGVREQIGCLILELIHAILNLCHETDLHSSHTPSLQFLCICSLAYTEAGQTVINIMGIGVDTIDMVMAAQPRSDGAEGQGQGQLLIKTVKLAFSVTNNVIRLKPPSNVVSPLEQALSQHGAHGNNLIAVLAKYIYHKHDPALPRLAIQLLKRLATVAPMSVYACLGNDAAAIRDAFLTRLQSKIEDMRIKVMILEFLTVAVETQPGLIELFLNLEVKDGSDGSKEFSLGMWSCLHAVLELIDSQQQDRYWCPPLLHRAAIAFLHALWQDRRDSAMLVLRTKPKFWENLTSPLFGTLSPPSETSEPSILETCALIMKIICLEIYYVVKGSLDQSLKDTLKKFSIEKRFAYWSGYVKSLAVHVAETEGSSCTSLLEYQMLVSAWRMLLIIATTHADIMHLTDSVVRRQLFLDVLDGTKALLLVPASVNCLRLGSMKCTLLLILLRQWKRELGSVDEILGPLTEILEGVLQADQQLMEKTKAKVFSAFITVLQMKEMKVSDIPQYSQLVLNVCETLQEEVIALFDQTRHSLALGSATEDKDSMETDDCSRSRHRDQRDGVCVLGLHLAKELCEVDEDGDSWLQVTRRLPILPTLLTTLEVSLRMKQNLHFTEATLHLLLTLARTQQGATAVAGAGITQSICLPLLSVYQLSTNGTAQTPSASRKSLDAPSWPGVYRLSMSLMEQLLKTLRYNFLPEALDFVGVHQERTLQCLNAVRTVQSLACLEEADHTVGFILQLSNFMKEWHFHLPQLMRDIQVNLGYLCQACTSLLHSRKMLQHYLQNKNGDGLPSAVAQRVQRPPSAASAAPSSSKQPAADTEASEQQALHTVQYGLLKILSKTLAALRHFTPDVCQILLDQSLDLAEYNFLFALSFTTPTFDSEVAPSFGTLLATVNVALNMLGELDKKKEPLTQAVGLSTQAEGTRTLKSLLMFTMENCFYLLISQAMRYLRDPAVHPRDKQRMKQELSSELSTLLSSLSRYFRRGAPSSPATGVLPSPQGKSTSLSKASPESQEPLIQLVQAFVRHMQR</sequence>
<comment type="function">
    <text evidence="4 8">Component of the nuclear pore complex (NPC), a complex required for the trafficking across the nuclear envelope (Probable). Required for proper protein transport into the nucleus (PubMed:32275884).</text>
</comment>
<comment type="subunit">
    <text evidence="8">Part of the nuclear pore complex (NPC).</text>
</comment>
<comment type="subcellular location">
    <subcellularLocation>
        <location evidence="8">Nucleus</location>
        <location evidence="8">Nuclear pore complex</location>
    </subcellularLocation>
</comment>
<comment type="alternative products">
    <event type="alternative splicing"/>
    <isoform>
        <id>Q5SRE5-1</id>
        <name>1</name>
        <sequence type="displayed"/>
    </isoform>
    <isoform>
        <id>Q5SRE5-2</id>
        <name>2</name>
        <sequence type="described" ref="VSP_027585"/>
    </isoform>
</comment>
<comment type="disease">
    <text evidence="2">Copy number variations of NUP188 gene may be a cause of heterotaxy, a congenital heart disease resulting from abnormalities in left-right (LR) body patterning.</text>
</comment>
<comment type="disease" evidence="3 4">
    <disease id="DI-05785">
        <name>Sandestig-Stefanova syndrome</name>
        <acronym>SANDSTEF</acronym>
        <description>An autosomal recessive syndrome characterized by pre- and postnatal microcephaly, trigonocephaly, congenital bilateral cataract, microphthalmia, cleft lip and palate or high-arched palate, camptodactyly, rocker-bottom feet, heart anomalies, specific brain changes such as loss of periventricular white matter, thin corpus callosum, and delayed myelinization.</description>
        <dbReference type="MIM" id="618804"/>
    </disease>
    <text>The disease is caused by variants affecting the gene represented in this entry.</text>
</comment>
<comment type="similarity">
    <text evidence="7">Belongs to the Nup188 family.</text>
</comment>
<comment type="sequence caution" evidence="7">
    <conflict type="erroneous initiation">
        <sequence resource="EMBL-CDS" id="CAD97835"/>
    </conflict>
    <text>Extended N-terminus.</text>
</comment>
<feature type="initiator methionine" description="Removed" evidence="12">
    <location>
        <position position="1"/>
    </location>
</feature>
<feature type="chain" id="PRO_0000299172" description="Nucleoporin NUP188">
    <location>
        <begin position="2"/>
        <end position="1749"/>
    </location>
</feature>
<feature type="region of interest" description="Disordered" evidence="1">
    <location>
        <begin position="1514"/>
        <end position="1542"/>
    </location>
</feature>
<feature type="region of interest" description="Disordered" evidence="1">
    <location>
        <begin position="1707"/>
        <end position="1733"/>
    </location>
</feature>
<feature type="compositionally biased region" description="Low complexity" evidence="1">
    <location>
        <begin position="1521"/>
        <end position="1537"/>
    </location>
</feature>
<feature type="compositionally biased region" description="Polar residues" evidence="1">
    <location>
        <begin position="1719"/>
        <end position="1732"/>
    </location>
</feature>
<feature type="modified residue" description="N-acetylalanine" evidence="12">
    <location>
        <position position="2"/>
    </location>
</feature>
<feature type="modified residue" description="Phosphoserine" evidence="16 17">
    <location>
        <position position="1523"/>
    </location>
</feature>
<feature type="modified residue" description="Phosphoserine" evidence="10 16">
    <location>
        <position position="1709"/>
    </location>
</feature>
<feature type="modified residue" description="Phosphothreonine" evidence="17">
    <location>
        <position position="1712"/>
    </location>
</feature>
<feature type="modified residue" description="Phosphoserine" evidence="9 10 11 13 14 15 16">
    <location>
        <position position="1717"/>
    </location>
</feature>
<feature type="splice variant" id="VSP_027585" description="In isoform 2." evidence="6">
    <location>
        <begin position="116"/>
        <end position="226"/>
    </location>
</feature>
<feature type="sequence variant" id="VAR_083845" description="In SANDSTEF." evidence="3">
    <location>
        <begin position="113"/>
        <end position="1749"/>
    </location>
</feature>
<feature type="sequence variant" id="VAR_085785" description="Found in a patient with syndromic developmental delay; uncertain significance; dbSNP:rs372052732." evidence="5">
    <original>M</original>
    <variation>L</variation>
    <location>
        <position position="195"/>
    </location>
</feature>
<feature type="sequence variant" id="VAR_083846" description="In SANDSTEF." evidence="4">
    <location>
        <begin position="630"/>
        <end position="1749"/>
    </location>
</feature>
<feature type="sequence variant" id="VAR_083847" description="In SANDSTEF; undetectable protein expression; loss of nuclear localization." evidence="4">
    <location>
        <begin position="1048"/>
        <end position="1749"/>
    </location>
</feature>
<feature type="sequence variant" id="VAR_083848" description="In SANDSTEF." evidence="4">
    <location>
        <begin position="1360"/>
        <end position="1749"/>
    </location>
</feature>
<feature type="sequence variant" id="VAR_034792" description="In dbSNP:rs17433024.">
    <original>A</original>
    <variation>V</variation>
    <location>
        <position position="1419"/>
    </location>
</feature>
<feature type="sequence variant" id="VAR_034793" description="In dbSNP:rs12350674.">
    <original>N</original>
    <variation>K</variation>
    <location>
        <position position="1587"/>
    </location>
</feature>
<feature type="sequence conflict" description="In Ref. 1; CAD97835." evidence="7" ref="1">
    <original>A</original>
    <variation>T</variation>
    <location>
        <position position="773"/>
    </location>
</feature>
<feature type="sequence conflict" description="In Ref. 5; AAH40352." evidence="7" ref="5">
    <original>R</original>
    <variation>W</variation>
    <location>
        <position position="995"/>
    </location>
</feature>
<feature type="sequence conflict" description="In Ref. 1; CAD97835." evidence="7" ref="1">
    <original>Q</original>
    <variation>R</variation>
    <location>
        <position position="1196"/>
    </location>
</feature>
<gene>
    <name type="primary">NUP188</name>
    <name type="synonym">KIAA0169</name>
</gene>
<reference key="1">
    <citation type="journal article" date="2007" name="BMC Genomics">
        <title>The full-ORF clone resource of the German cDNA consortium.</title>
        <authorList>
            <person name="Bechtel S."/>
            <person name="Rosenfelder H."/>
            <person name="Duda A."/>
            <person name="Schmidt C.P."/>
            <person name="Ernst U."/>
            <person name="Wellenreuther R."/>
            <person name="Mehrle A."/>
            <person name="Schuster C."/>
            <person name="Bahr A."/>
            <person name="Bloecker H."/>
            <person name="Heubner D."/>
            <person name="Hoerlein A."/>
            <person name="Michel G."/>
            <person name="Wedler H."/>
            <person name="Koehrer K."/>
            <person name="Ottenwaelder B."/>
            <person name="Poustka A."/>
            <person name="Wiemann S."/>
            <person name="Schupp I."/>
        </authorList>
    </citation>
    <scope>NUCLEOTIDE SEQUENCE [LARGE SCALE MRNA] (ISOFORM 2)</scope>
    <source>
        <tissue>Endometrium</tissue>
    </source>
</reference>
<reference key="2">
    <citation type="journal article" date="2004" name="Nature">
        <title>DNA sequence and analysis of human chromosome 9.</title>
        <authorList>
            <person name="Humphray S.J."/>
            <person name="Oliver K."/>
            <person name="Hunt A.R."/>
            <person name="Plumb R.W."/>
            <person name="Loveland J.E."/>
            <person name="Howe K.L."/>
            <person name="Andrews T.D."/>
            <person name="Searle S."/>
            <person name="Hunt S.E."/>
            <person name="Scott C.E."/>
            <person name="Jones M.C."/>
            <person name="Ainscough R."/>
            <person name="Almeida J.P."/>
            <person name="Ambrose K.D."/>
            <person name="Ashwell R.I.S."/>
            <person name="Babbage A.K."/>
            <person name="Babbage S."/>
            <person name="Bagguley C.L."/>
            <person name="Bailey J."/>
            <person name="Banerjee R."/>
            <person name="Barker D.J."/>
            <person name="Barlow K.F."/>
            <person name="Bates K."/>
            <person name="Beasley H."/>
            <person name="Beasley O."/>
            <person name="Bird C.P."/>
            <person name="Bray-Allen S."/>
            <person name="Brown A.J."/>
            <person name="Brown J.Y."/>
            <person name="Burford D."/>
            <person name="Burrill W."/>
            <person name="Burton J."/>
            <person name="Carder C."/>
            <person name="Carter N.P."/>
            <person name="Chapman J.C."/>
            <person name="Chen Y."/>
            <person name="Clarke G."/>
            <person name="Clark S.Y."/>
            <person name="Clee C.M."/>
            <person name="Clegg S."/>
            <person name="Collier R.E."/>
            <person name="Corby N."/>
            <person name="Crosier M."/>
            <person name="Cummings A.T."/>
            <person name="Davies J."/>
            <person name="Dhami P."/>
            <person name="Dunn M."/>
            <person name="Dutta I."/>
            <person name="Dyer L.W."/>
            <person name="Earthrowl M.E."/>
            <person name="Faulkner L."/>
            <person name="Fleming C.J."/>
            <person name="Frankish A."/>
            <person name="Frankland J.A."/>
            <person name="French L."/>
            <person name="Fricker D.G."/>
            <person name="Garner P."/>
            <person name="Garnett J."/>
            <person name="Ghori J."/>
            <person name="Gilbert J.G.R."/>
            <person name="Glison C."/>
            <person name="Grafham D.V."/>
            <person name="Gribble S."/>
            <person name="Griffiths C."/>
            <person name="Griffiths-Jones S."/>
            <person name="Grocock R."/>
            <person name="Guy J."/>
            <person name="Hall R.E."/>
            <person name="Hammond S."/>
            <person name="Harley J.L."/>
            <person name="Harrison E.S.I."/>
            <person name="Hart E.A."/>
            <person name="Heath P.D."/>
            <person name="Henderson C.D."/>
            <person name="Hopkins B.L."/>
            <person name="Howard P.J."/>
            <person name="Howden P.J."/>
            <person name="Huckle E."/>
            <person name="Johnson C."/>
            <person name="Johnson D."/>
            <person name="Joy A.A."/>
            <person name="Kay M."/>
            <person name="Keenan S."/>
            <person name="Kershaw J.K."/>
            <person name="Kimberley A.M."/>
            <person name="King A."/>
            <person name="Knights A."/>
            <person name="Laird G.K."/>
            <person name="Langford C."/>
            <person name="Lawlor S."/>
            <person name="Leongamornlert D.A."/>
            <person name="Leversha M."/>
            <person name="Lloyd C."/>
            <person name="Lloyd D.M."/>
            <person name="Lovell J."/>
            <person name="Martin S."/>
            <person name="Mashreghi-Mohammadi M."/>
            <person name="Matthews L."/>
            <person name="McLaren S."/>
            <person name="McLay K.E."/>
            <person name="McMurray A."/>
            <person name="Milne S."/>
            <person name="Nickerson T."/>
            <person name="Nisbett J."/>
            <person name="Nordsiek G."/>
            <person name="Pearce A.V."/>
            <person name="Peck A.I."/>
            <person name="Porter K.M."/>
            <person name="Pandian R."/>
            <person name="Pelan S."/>
            <person name="Phillimore B."/>
            <person name="Povey S."/>
            <person name="Ramsey Y."/>
            <person name="Rand V."/>
            <person name="Scharfe M."/>
            <person name="Sehra H.K."/>
            <person name="Shownkeen R."/>
            <person name="Sims S.K."/>
            <person name="Skuce C.D."/>
            <person name="Smith M."/>
            <person name="Steward C.A."/>
            <person name="Swarbreck D."/>
            <person name="Sycamore N."/>
            <person name="Tester J."/>
            <person name="Thorpe A."/>
            <person name="Tracey A."/>
            <person name="Tromans A."/>
            <person name="Thomas D.W."/>
            <person name="Wall M."/>
            <person name="Wallis J.M."/>
            <person name="West A.P."/>
            <person name="Whitehead S.L."/>
            <person name="Willey D.L."/>
            <person name="Williams S.A."/>
            <person name="Wilming L."/>
            <person name="Wray P.W."/>
            <person name="Young L."/>
            <person name="Ashurst J.L."/>
            <person name="Coulson A."/>
            <person name="Blocker H."/>
            <person name="Durbin R.M."/>
            <person name="Sulston J.E."/>
            <person name="Hubbard T."/>
            <person name="Jackson M.J."/>
            <person name="Bentley D.R."/>
            <person name="Beck S."/>
            <person name="Rogers J."/>
            <person name="Dunham I."/>
        </authorList>
    </citation>
    <scope>NUCLEOTIDE SEQUENCE [LARGE SCALE GENOMIC DNA]</scope>
</reference>
<reference key="3">
    <citation type="submission" date="2006-12" db="EMBL/GenBank/DDBJ databases">
        <authorList>
            <person name="Mural R.J."/>
            <person name="Istrail S."/>
            <person name="Sutton G.G."/>
            <person name="Florea L."/>
            <person name="Halpern A.L."/>
            <person name="Mobarry C.M."/>
            <person name="Lippert R."/>
            <person name="Walenz B."/>
            <person name="Shatkay H."/>
            <person name="Dew I."/>
            <person name="Miller J.R."/>
            <person name="Flanigan M.J."/>
            <person name="Edwards N.J."/>
            <person name="Bolanos R."/>
            <person name="Fasulo D."/>
            <person name="Halldorsson B.V."/>
            <person name="Hannenhalli S."/>
            <person name="Turner R."/>
            <person name="Yooseph S."/>
            <person name="Lu F."/>
            <person name="Nusskern D.R."/>
            <person name="Shue B.C."/>
            <person name="Zheng X.H."/>
            <person name="Zhong F."/>
            <person name="Delcher A.L."/>
            <person name="Huson D.H."/>
            <person name="Kravitz S.A."/>
            <person name="Mouchard L."/>
            <person name="Reinert K."/>
            <person name="Remington K.A."/>
            <person name="Clark A.G."/>
            <person name="Waterman M.S."/>
            <person name="Eichler E.E."/>
            <person name="Adams M.D."/>
            <person name="Hunkapiller M.W."/>
            <person name="Myers E.W."/>
            <person name="Venter J.C."/>
        </authorList>
    </citation>
    <scope>NUCLEOTIDE SEQUENCE [LARGE SCALE GENOMIC DNA]</scope>
</reference>
<reference key="4">
    <citation type="journal article" date="1996" name="DNA Res.">
        <title>Prediction of the coding sequences of unidentified human genes. V. The coding sequences of 40 new genes (KIAA0161-KIAA0200) deduced by analysis of cDNA clones from human cell line KG-1.</title>
        <authorList>
            <person name="Nagase T."/>
            <person name="Seki N."/>
            <person name="Ishikawa K."/>
            <person name="Tanaka A."/>
            <person name="Nomura N."/>
        </authorList>
    </citation>
    <scope>NUCLEOTIDE SEQUENCE [LARGE SCALE MRNA] OF 5-1749 (ISOFORM 1)</scope>
    <source>
        <tissue>Bone marrow</tissue>
    </source>
</reference>
<reference key="5">
    <citation type="journal article" date="2004" name="Genome Res.">
        <title>The status, quality, and expansion of the NIH full-length cDNA project: the Mammalian Gene Collection (MGC).</title>
        <authorList>
            <consortium name="The MGC Project Team"/>
        </authorList>
    </citation>
    <scope>NUCLEOTIDE SEQUENCE [LARGE SCALE MRNA] OF 457-1749</scope>
    <source>
        <tissue>Ovary</tissue>
        <tissue>Uterus</tissue>
    </source>
</reference>
<reference key="6">
    <citation type="journal article" date="2000" name="Mol. Biol. Cell">
        <title>Identification of a new vertebrate nucleoporin, Nup188, with the use of a novel organelle trap assay.</title>
        <authorList>
            <person name="Miller B.R."/>
            <person name="Powers M."/>
            <person name="Park M."/>
            <person name="Fischer W."/>
            <person name="Forbes D.J."/>
        </authorList>
    </citation>
    <scope>IDENTIFICATION AS NUCLEOPORIN</scope>
</reference>
<reference key="7">
    <citation type="journal article" date="2006" name="Cell">
        <title>Global, in vivo, and site-specific phosphorylation dynamics in signaling networks.</title>
        <authorList>
            <person name="Olsen J.V."/>
            <person name="Blagoev B."/>
            <person name="Gnad F."/>
            <person name="Macek B."/>
            <person name="Kumar C."/>
            <person name="Mortensen P."/>
            <person name="Mann M."/>
        </authorList>
    </citation>
    <scope>IDENTIFICATION BY MASS SPECTROMETRY [LARGE SCALE ANALYSIS]</scope>
    <source>
        <tissue>Cervix carcinoma</tissue>
    </source>
</reference>
<reference key="8">
    <citation type="journal article" date="2006" name="Nat. Biotechnol.">
        <title>A probability-based approach for high-throughput protein phosphorylation analysis and site localization.</title>
        <authorList>
            <person name="Beausoleil S.A."/>
            <person name="Villen J."/>
            <person name="Gerber S.A."/>
            <person name="Rush J."/>
            <person name="Gygi S.P."/>
        </authorList>
    </citation>
    <scope>PHOSPHORYLATION [LARGE SCALE ANALYSIS] AT SER-1717</scope>
    <scope>IDENTIFICATION BY MASS SPECTROMETRY [LARGE SCALE ANALYSIS]</scope>
    <source>
        <tissue>Cervix carcinoma</tissue>
    </source>
</reference>
<reference key="9">
    <citation type="journal article" date="2008" name="Mol. Cell">
        <title>Kinase-selective enrichment enables quantitative phosphoproteomics of the kinome across the cell cycle.</title>
        <authorList>
            <person name="Daub H."/>
            <person name="Olsen J.V."/>
            <person name="Bairlein M."/>
            <person name="Gnad F."/>
            <person name="Oppermann F.S."/>
            <person name="Korner R."/>
            <person name="Greff Z."/>
            <person name="Keri G."/>
            <person name="Stemmann O."/>
            <person name="Mann M."/>
        </authorList>
    </citation>
    <scope>PHOSPHORYLATION [LARGE SCALE ANALYSIS] AT SER-1717</scope>
    <scope>IDENTIFICATION BY MASS SPECTROMETRY [LARGE SCALE ANALYSIS]</scope>
    <source>
        <tissue>Cervix carcinoma</tissue>
    </source>
</reference>
<reference key="10">
    <citation type="journal article" date="2008" name="Proc. Natl. Acad. Sci. U.S.A.">
        <title>A quantitative atlas of mitotic phosphorylation.</title>
        <authorList>
            <person name="Dephoure N."/>
            <person name="Zhou C."/>
            <person name="Villen J."/>
            <person name="Beausoleil S.A."/>
            <person name="Bakalarski C.E."/>
            <person name="Elledge S.J."/>
            <person name="Gygi S.P."/>
        </authorList>
    </citation>
    <scope>PHOSPHORYLATION [LARGE SCALE ANALYSIS] AT SER-1709 AND SER-1717</scope>
    <scope>IDENTIFICATION BY MASS SPECTROMETRY [LARGE SCALE ANALYSIS]</scope>
    <source>
        <tissue>Cervix carcinoma</tissue>
    </source>
</reference>
<reference key="11">
    <citation type="journal article" date="2009" name="Anal. Chem.">
        <title>Lys-N and trypsin cover complementary parts of the phosphoproteome in a refined SCX-based approach.</title>
        <authorList>
            <person name="Gauci S."/>
            <person name="Helbig A.O."/>
            <person name="Slijper M."/>
            <person name="Krijgsveld J."/>
            <person name="Heck A.J."/>
            <person name="Mohammed S."/>
        </authorList>
    </citation>
    <scope>ACETYLATION [LARGE SCALE ANALYSIS] AT ALA-2</scope>
    <scope>CLEAVAGE OF INITIATOR METHIONINE [LARGE SCALE ANALYSIS]</scope>
    <scope>IDENTIFICATION BY MASS SPECTROMETRY [LARGE SCALE ANALYSIS]</scope>
</reference>
<reference key="12">
    <citation type="journal article" date="2009" name="Mol. Cell. Proteomics">
        <title>Large-scale proteomics analysis of the human kinome.</title>
        <authorList>
            <person name="Oppermann F.S."/>
            <person name="Gnad F."/>
            <person name="Olsen J.V."/>
            <person name="Hornberger R."/>
            <person name="Greff Z."/>
            <person name="Keri G."/>
            <person name="Mann M."/>
            <person name="Daub H."/>
        </authorList>
    </citation>
    <scope>IDENTIFICATION BY MASS SPECTROMETRY [LARGE SCALE ANALYSIS]</scope>
</reference>
<reference key="13">
    <citation type="journal article" date="2009" name="Sci. Signal.">
        <title>Quantitative phosphoproteomic analysis of T cell receptor signaling reveals system-wide modulation of protein-protein interactions.</title>
        <authorList>
            <person name="Mayya V."/>
            <person name="Lundgren D.H."/>
            <person name="Hwang S.-I."/>
            <person name="Rezaul K."/>
            <person name="Wu L."/>
            <person name="Eng J.K."/>
            <person name="Rodionov V."/>
            <person name="Han D.K."/>
        </authorList>
    </citation>
    <scope>PHOSPHORYLATION [LARGE SCALE ANALYSIS] AT SER-1717</scope>
    <scope>IDENTIFICATION BY MASS SPECTROMETRY [LARGE SCALE ANALYSIS]</scope>
    <source>
        <tissue>Leukemic T-cell</tissue>
    </source>
</reference>
<reference key="14">
    <citation type="journal article" date="2010" name="Sci. Signal.">
        <title>Quantitative phosphoproteomics reveals widespread full phosphorylation site occupancy during mitosis.</title>
        <authorList>
            <person name="Olsen J.V."/>
            <person name="Vermeulen M."/>
            <person name="Santamaria A."/>
            <person name="Kumar C."/>
            <person name="Miller M.L."/>
            <person name="Jensen L.J."/>
            <person name="Gnad F."/>
            <person name="Cox J."/>
            <person name="Jensen T.S."/>
            <person name="Nigg E.A."/>
            <person name="Brunak S."/>
            <person name="Mann M."/>
        </authorList>
    </citation>
    <scope>PHOSPHORYLATION [LARGE SCALE ANALYSIS] AT SER-1717</scope>
    <scope>IDENTIFICATION BY MASS SPECTROMETRY [LARGE SCALE ANALYSIS]</scope>
    <source>
        <tissue>Cervix carcinoma</tissue>
    </source>
</reference>
<reference key="15">
    <citation type="journal article" date="2011" name="BMC Syst. Biol.">
        <title>Initial characterization of the human central proteome.</title>
        <authorList>
            <person name="Burkard T.R."/>
            <person name="Planyavsky M."/>
            <person name="Kaupe I."/>
            <person name="Breitwieser F.P."/>
            <person name="Buerckstuemmer T."/>
            <person name="Bennett K.L."/>
            <person name="Superti-Furga G."/>
            <person name="Colinge J."/>
        </authorList>
    </citation>
    <scope>IDENTIFICATION BY MASS SPECTROMETRY [LARGE SCALE ANALYSIS]</scope>
</reference>
<reference key="16">
    <citation type="journal article" date="2011" name="Proc. Natl. Acad. Sci. U.S.A.">
        <title>Rare copy number variations in congenital heart disease patients identify unique genes in left-right patterning.</title>
        <authorList>
            <person name="Fakhro K.A."/>
            <person name="Choi M."/>
            <person name="Ware S.M."/>
            <person name="Belmont J.W."/>
            <person name="Towbin J.A."/>
            <person name="Lifton R.P."/>
            <person name="Khokha M.K."/>
            <person name="Brueckner M."/>
        </authorList>
    </citation>
    <scope>POSSIBLE INVOLVEMENT IN HETEROTAXY</scope>
</reference>
<reference key="17">
    <citation type="journal article" date="2011" name="Sci. Signal.">
        <title>System-wide temporal characterization of the proteome and phosphoproteome of human embryonic stem cell differentiation.</title>
        <authorList>
            <person name="Rigbolt K.T."/>
            <person name="Prokhorova T.A."/>
            <person name="Akimov V."/>
            <person name="Henningsen J."/>
            <person name="Johansen P.T."/>
            <person name="Kratchmarova I."/>
            <person name="Kassem M."/>
            <person name="Mann M."/>
            <person name="Olsen J.V."/>
            <person name="Blagoev B."/>
        </authorList>
    </citation>
    <scope>PHOSPHORYLATION [LARGE SCALE ANALYSIS] AT SER-1717</scope>
    <scope>IDENTIFICATION BY MASS SPECTROMETRY [LARGE SCALE ANALYSIS]</scope>
</reference>
<reference key="18">
    <citation type="journal article" date="2013" name="J. Proteome Res.">
        <title>Toward a comprehensive characterization of a human cancer cell phosphoproteome.</title>
        <authorList>
            <person name="Zhou H."/>
            <person name="Di Palma S."/>
            <person name="Preisinger C."/>
            <person name="Peng M."/>
            <person name="Polat A.N."/>
            <person name="Heck A.J."/>
            <person name="Mohammed S."/>
        </authorList>
    </citation>
    <scope>PHOSPHORYLATION [LARGE SCALE ANALYSIS] AT SER-1523; SER-1709 AND SER-1717</scope>
    <scope>IDENTIFICATION BY MASS SPECTROMETRY [LARGE SCALE ANALYSIS]</scope>
    <source>
        <tissue>Cervix carcinoma</tissue>
        <tissue>Erythroleukemia</tissue>
    </source>
</reference>
<reference key="19">
    <citation type="journal article" date="2014" name="J. Proteomics">
        <title>An enzyme assisted RP-RPLC approach for in-depth analysis of human liver phosphoproteome.</title>
        <authorList>
            <person name="Bian Y."/>
            <person name="Song C."/>
            <person name="Cheng K."/>
            <person name="Dong M."/>
            <person name="Wang F."/>
            <person name="Huang J."/>
            <person name="Sun D."/>
            <person name="Wang L."/>
            <person name="Ye M."/>
            <person name="Zou H."/>
        </authorList>
    </citation>
    <scope>PHOSPHORYLATION [LARGE SCALE ANALYSIS] AT SER-1523 AND THR-1712</scope>
    <scope>IDENTIFICATION BY MASS SPECTROMETRY [LARGE SCALE ANALYSIS]</scope>
    <source>
        <tissue>Liver</tissue>
    </source>
</reference>
<reference key="20">
    <citation type="journal article" date="2020" name="Am. J. Hum. Genet.">
        <title>Bi-allelic loss-of-function variants in NUP188 cause a recognizable syndrome characterized by neurologic, ocular, and cardiac abnormalities.</title>
        <authorList>
            <person name="Muir A.M."/>
            <person name="Cohen J.L."/>
            <person name="Sheppard S.E."/>
            <person name="Guttipatti P."/>
            <person name="Lo T.Y."/>
            <person name="Weed N."/>
            <person name="Doherty D."/>
            <person name="DeMarzo D."/>
            <person name="Fagerberg C.R."/>
            <person name="Kjaersgaard L."/>
            <person name="Larsen M.J."/>
            <person name="Rump P."/>
            <person name="Loehner K."/>
            <person name="Hirsch Y."/>
            <person name="Zeevi D.A."/>
            <person name="Zackai E.H."/>
            <person name="Bhoj E."/>
            <person name="Song Y."/>
            <person name="Mefford H.C."/>
        </authorList>
    </citation>
    <scope>INVOLVEMENT IN SANDSTEF</scope>
    <scope>FUNCTION</scope>
    <scope>VARIANTS SANDSTEF 630-TRP--ARG-1749 DEL; 1048-TYR--ARG-1749 DEL AND 1360-GLN--ARG-1749 DEL</scope>
    <scope>CHARACTERIZATION OF VARIANT SANDSTEF 1048-TYR--ARG-1749 DEL</scope>
</reference>
<reference key="21">
    <citation type="journal article" date="2020" name="Mol. Syndromol.">
        <title>NUP188 biallelic loss of function may underlie a new syndrome: nucleoporin 188 insufficiency syndrome?</title>
        <authorList>
            <person name="Sandestig A."/>
            <person name="Engstroem K."/>
            <person name="Pepler A."/>
            <person name="Danielsson I."/>
            <person name="Odelberg-Johnsson P."/>
            <person name="Biskup S."/>
            <person name="Holz A."/>
            <person name="Stefanova M."/>
        </authorList>
    </citation>
    <scope>INVOLVEMENT IN SANDSTEF</scope>
    <scope>VARIANT SANDSTEF 113-GLN--ARG-1749 DEL</scope>
</reference>
<reference key="22">
    <citation type="journal article" date="2021" name="J. Med. Genet.">
        <title>De novo variants in SIAH1, encoding an E3 ubiquitin ligase, are associated with developmental delay, hypotonia and dysmorphic features.</title>
        <authorList>
            <person name="Buratti J."/>
            <person name="Ji L."/>
            <person name="Keren B."/>
            <person name="Lee Y."/>
            <person name="Booke S."/>
            <person name="Erdin S."/>
            <person name="Kim S.Y."/>
            <person name="Palculict T.B."/>
            <person name="Meiner V."/>
            <person name="Chae J.H."/>
            <person name="Woods C.G."/>
            <person name="Tam A."/>
            <person name="Heron D."/>
            <person name="Cong F."/>
            <person name="Harel T."/>
        </authorList>
    </citation>
    <scope>VARIANT LEU-195</scope>
</reference>
<dbReference type="EMBL" id="BX537774">
    <property type="protein sequence ID" value="CAD97835.1"/>
    <property type="status" value="ALT_INIT"/>
    <property type="molecule type" value="mRNA"/>
</dbReference>
<dbReference type="EMBL" id="AL592211">
    <property type="status" value="NOT_ANNOTATED_CDS"/>
    <property type="molecule type" value="Genomic_DNA"/>
</dbReference>
<dbReference type="EMBL" id="AL672142">
    <property type="status" value="NOT_ANNOTATED_CDS"/>
    <property type="molecule type" value="Genomic_DNA"/>
</dbReference>
<dbReference type="EMBL" id="CH471090">
    <property type="protein sequence ID" value="EAW87850.1"/>
    <property type="molecule type" value="Genomic_DNA"/>
</dbReference>
<dbReference type="EMBL" id="D79991">
    <property type="protein sequence ID" value="BAA11486.1"/>
    <property type="molecule type" value="mRNA"/>
</dbReference>
<dbReference type="EMBL" id="BC040352">
    <property type="protein sequence ID" value="AAH40352.1"/>
    <property type="molecule type" value="mRNA"/>
</dbReference>
<dbReference type="EMBL" id="BC111045">
    <property type="protein sequence ID" value="AAI11046.1"/>
    <property type="molecule type" value="mRNA"/>
</dbReference>
<dbReference type="CCDS" id="CCDS35156.1">
    <molecule id="Q5SRE5-1"/>
</dbReference>
<dbReference type="RefSeq" id="NP_056169.1">
    <molecule id="Q5SRE5-1"/>
    <property type="nucleotide sequence ID" value="NM_015354.3"/>
</dbReference>
<dbReference type="PDB" id="5IJO">
    <property type="method" value="EM"/>
    <property type="resolution" value="21.40 A"/>
    <property type="chains" value="J/V=1-1749"/>
</dbReference>
<dbReference type="PDB" id="7R5J">
    <property type="method" value="EM"/>
    <property type="resolution" value="50.00 A"/>
    <property type="chains" value="B0/B1=1-1749"/>
</dbReference>
<dbReference type="PDB" id="7R5K">
    <property type="method" value="EM"/>
    <property type="resolution" value="12.00 A"/>
    <property type="chains" value="B0/B1=1-1749"/>
</dbReference>
<dbReference type="PDBsum" id="5IJO"/>
<dbReference type="PDBsum" id="7R5J"/>
<dbReference type="PDBsum" id="7R5K"/>
<dbReference type="EMDB" id="EMD-14321"/>
<dbReference type="EMDB" id="EMD-14322"/>
<dbReference type="SMR" id="Q5SRE5"/>
<dbReference type="BioGRID" id="117058">
    <property type="interactions" value="190"/>
</dbReference>
<dbReference type="ComplexPortal" id="CPX-873">
    <property type="entry name" value="Nuclear pore complex"/>
</dbReference>
<dbReference type="CORUM" id="Q5SRE5"/>
<dbReference type="FunCoup" id="Q5SRE5">
    <property type="interactions" value="3797"/>
</dbReference>
<dbReference type="IntAct" id="Q5SRE5">
    <property type="interactions" value="79"/>
</dbReference>
<dbReference type="MINT" id="Q5SRE5"/>
<dbReference type="STRING" id="9606.ENSP00000361658"/>
<dbReference type="TCDB" id="1.I.1.1.3">
    <property type="family name" value="the nuclear pore complex (npc) family"/>
</dbReference>
<dbReference type="GlyGen" id="Q5SRE5">
    <property type="glycosylation" value="1 site, 1 O-linked glycan (1 site)"/>
</dbReference>
<dbReference type="iPTMnet" id="Q5SRE5"/>
<dbReference type="MetOSite" id="Q5SRE5"/>
<dbReference type="PhosphoSitePlus" id="Q5SRE5"/>
<dbReference type="SwissPalm" id="Q5SRE5"/>
<dbReference type="BioMuta" id="NUP188"/>
<dbReference type="DMDM" id="74743623"/>
<dbReference type="jPOST" id="Q5SRE5"/>
<dbReference type="MassIVE" id="Q5SRE5"/>
<dbReference type="PaxDb" id="9606-ENSP00000361658"/>
<dbReference type="PeptideAtlas" id="Q5SRE5"/>
<dbReference type="ProteomicsDB" id="63844">
    <molecule id="Q5SRE5-1"/>
</dbReference>
<dbReference type="ProteomicsDB" id="63845">
    <molecule id="Q5SRE5-2"/>
</dbReference>
<dbReference type="Pumba" id="Q5SRE5"/>
<dbReference type="Antibodypedia" id="34836">
    <property type="antibodies" value="83 antibodies from 12 providers"/>
</dbReference>
<dbReference type="DNASU" id="23511"/>
<dbReference type="Ensembl" id="ENST00000372577.2">
    <molecule id="Q5SRE5-1"/>
    <property type="protein sequence ID" value="ENSP00000361658.2"/>
    <property type="gene ID" value="ENSG00000095319.14"/>
</dbReference>
<dbReference type="GeneID" id="23511"/>
<dbReference type="KEGG" id="hsa:23511"/>
<dbReference type="MANE-Select" id="ENST00000372577.2">
    <property type="protein sequence ID" value="ENSP00000361658.2"/>
    <property type="RefSeq nucleotide sequence ID" value="NM_015354.3"/>
    <property type="RefSeq protein sequence ID" value="NP_056169.1"/>
</dbReference>
<dbReference type="UCSC" id="uc004bws.3">
    <molecule id="Q5SRE5-1"/>
    <property type="organism name" value="human"/>
</dbReference>
<dbReference type="AGR" id="HGNC:17859"/>
<dbReference type="CTD" id="23511"/>
<dbReference type="DisGeNET" id="23511"/>
<dbReference type="GeneCards" id="NUP188"/>
<dbReference type="HGNC" id="HGNC:17859">
    <property type="gene designation" value="NUP188"/>
</dbReference>
<dbReference type="HPA" id="ENSG00000095319">
    <property type="expression patterns" value="Low tissue specificity"/>
</dbReference>
<dbReference type="MalaCards" id="NUP188"/>
<dbReference type="MIM" id="615587">
    <property type="type" value="gene"/>
</dbReference>
<dbReference type="MIM" id="618804">
    <property type="type" value="phenotype"/>
</dbReference>
<dbReference type="neXtProt" id="NX_Q5SRE5"/>
<dbReference type="OpenTargets" id="ENSG00000095319"/>
<dbReference type="PharmGKB" id="PA134908952"/>
<dbReference type="VEuPathDB" id="HostDB:ENSG00000095319"/>
<dbReference type="eggNOG" id="KOG4833">
    <property type="taxonomic scope" value="Eukaryota"/>
</dbReference>
<dbReference type="GeneTree" id="ENSGT00390000005742"/>
<dbReference type="HOGENOM" id="CLU_002623_1_0_1"/>
<dbReference type="InParanoid" id="Q5SRE5"/>
<dbReference type="OMA" id="PMAEMNF"/>
<dbReference type="OrthoDB" id="102511at2759"/>
<dbReference type="PAN-GO" id="Q5SRE5">
    <property type="GO annotations" value="4 GO annotations based on evolutionary models"/>
</dbReference>
<dbReference type="PhylomeDB" id="Q5SRE5"/>
<dbReference type="TreeFam" id="TF101106"/>
<dbReference type="PathwayCommons" id="Q5SRE5"/>
<dbReference type="Reactome" id="R-HSA-1169408">
    <property type="pathway name" value="ISG15 antiviral mechanism"/>
</dbReference>
<dbReference type="Reactome" id="R-HSA-159227">
    <property type="pathway name" value="Transport of the SLBP independent Mature mRNA"/>
</dbReference>
<dbReference type="Reactome" id="R-HSA-159230">
    <property type="pathway name" value="Transport of the SLBP Dependant Mature mRNA"/>
</dbReference>
<dbReference type="Reactome" id="R-HSA-159231">
    <property type="pathway name" value="Transport of Mature mRNA Derived from an Intronless Transcript"/>
</dbReference>
<dbReference type="Reactome" id="R-HSA-159236">
    <property type="pathway name" value="Transport of Mature mRNA derived from an Intron-Containing Transcript"/>
</dbReference>
<dbReference type="Reactome" id="R-HSA-165054">
    <property type="pathway name" value="Rev-mediated nuclear export of HIV RNA"/>
</dbReference>
<dbReference type="Reactome" id="R-HSA-168271">
    <property type="pathway name" value="Transport of Ribonucleoproteins into the Host Nucleus"/>
</dbReference>
<dbReference type="Reactome" id="R-HSA-168276">
    <property type="pathway name" value="NS1 Mediated Effects on Host Pathways"/>
</dbReference>
<dbReference type="Reactome" id="R-HSA-168325">
    <property type="pathway name" value="Viral Messenger RNA Synthesis"/>
</dbReference>
<dbReference type="Reactome" id="R-HSA-168333">
    <property type="pathway name" value="NEP/NS2 Interacts with the Cellular Export Machinery"/>
</dbReference>
<dbReference type="Reactome" id="R-HSA-170822">
    <property type="pathway name" value="Regulation of Glucokinase by Glucokinase Regulatory Protein"/>
</dbReference>
<dbReference type="Reactome" id="R-HSA-180746">
    <property type="pathway name" value="Nuclear import of Rev protein"/>
</dbReference>
<dbReference type="Reactome" id="R-HSA-180910">
    <property type="pathway name" value="Vpr-mediated nuclear import of PICs"/>
</dbReference>
<dbReference type="Reactome" id="R-HSA-191859">
    <property type="pathway name" value="snRNP Assembly"/>
</dbReference>
<dbReference type="Reactome" id="R-HSA-3108214">
    <property type="pathway name" value="SUMOylation of DNA damage response and repair proteins"/>
</dbReference>
<dbReference type="Reactome" id="R-HSA-3232142">
    <property type="pathway name" value="SUMOylation of ubiquitinylation proteins"/>
</dbReference>
<dbReference type="Reactome" id="R-HSA-3301854">
    <property type="pathway name" value="Nuclear Pore Complex (NPC) Disassembly"/>
</dbReference>
<dbReference type="Reactome" id="R-HSA-3371453">
    <property type="pathway name" value="Regulation of HSF1-mediated heat shock response"/>
</dbReference>
<dbReference type="Reactome" id="R-HSA-4085377">
    <property type="pathway name" value="SUMOylation of SUMOylation proteins"/>
</dbReference>
<dbReference type="Reactome" id="R-HSA-4551638">
    <property type="pathway name" value="SUMOylation of chromatin organization proteins"/>
</dbReference>
<dbReference type="Reactome" id="R-HSA-4570464">
    <property type="pathway name" value="SUMOylation of RNA binding proteins"/>
</dbReference>
<dbReference type="Reactome" id="R-HSA-4615885">
    <property type="pathway name" value="SUMOylation of DNA replication proteins"/>
</dbReference>
<dbReference type="Reactome" id="R-HSA-5578749">
    <property type="pathway name" value="Transcriptional regulation by small RNAs"/>
</dbReference>
<dbReference type="Reactome" id="R-HSA-5619107">
    <property type="pathway name" value="Defective TPR may confer susceptibility towards thyroid papillary carcinoma (TPC)"/>
</dbReference>
<dbReference type="Reactome" id="R-HSA-6784531">
    <property type="pathway name" value="tRNA processing in the nucleus"/>
</dbReference>
<dbReference type="Reactome" id="R-HSA-9609690">
    <property type="pathway name" value="HCMV Early Events"/>
</dbReference>
<dbReference type="Reactome" id="R-HSA-9610379">
    <property type="pathway name" value="HCMV Late Events"/>
</dbReference>
<dbReference type="Reactome" id="R-HSA-9615933">
    <property type="pathway name" value="Postmitotic nuclear pore complex (NPC) reformation"/>
</dbReference>
<dbReference type="Reactome" id="R-HSA-9705671">
    <property type="pathway name" value="SARS-CoV-2 activates/modulates innate and adaptive immune responses"/>
</dbReference>
<dbReference type="SignaLink" id="Q5SRE5"/>
<dbReference type="SIGNOR" id="Q5SRE5"/>
<dbReference type="BioGRID-ORCS" id="23511">
    <property type="hits" value="92 hits in 1164 CRISPR screens"/>
</dbReference>
<dbReference type="ChiTaRS" id="NUP188">
    <property type="organism name" value="human"/>
</dbReference>
<dbReference type="GenomeRNAi" id="23511"/>
<dbReference type="Pharos" id="Q5SRE5">
    <property type="development level" value="Tbio"/>
</dbReference>
<dbReference type="PRO" id="PR:Q5SRE5"/>
<dbReference type="Proteomes" id="UP000005640">
    <property type="component" value="Chromosome 9"/>
</dbReference>
<dbReference type="RNAct" id="Q5SRE5">
    <property type="molecule type" value="protein"/>
</dbReference>
<dbReference type="Bgee" id="ENSG00000095319">
    <property type="expression patterns" value="Expressed in right testis and 144 other cell types or tissues"/>
</dbReference>
<dbReference type="GO" id="GO:0005829">
    <property type="term" value="C:cytosol"/>
    <property type="evidence" value="ECO:0000304"/>
    <property type="project" value="Reactome"/>
</dbReference>
<dbReference type="GO" id="GO:0016020">
    <property type="term" value="C:membrane"/>
    <property type="evidence" value="ECO:0007005"/>
    <property type="project" value="UniProtKB"/>
</dbReference>
<dbReference type="GO" id="GO:0005635">
    <property type="term" value="C:nuclear envelope"/>
    <property type="evidence" value="ECO:0000314"/>
    <property type="project" value="ComplexPortal"/>
</dbReference>
<dbReference type="GO" id="GO:0005643">
    <property type="term" value="C:nuclear pore"/>
    <property type="evidence" value="ECO:0000303"/>
    <property type="project" value="ComplexPortal"/>
</dbReference>
<dbReference type="GO" id="GO:0044611">
    <property type="term" value="C:nuclear pore inner ring"/>
    <property type="evidence" value="ECO:0000318"/>
    <property type="project" value="GO_Central"/>
</dbReference>
<dbReference type="GO" id="GO:0017056">
    <property type="term" value="F:structural constituent of nuclear pore"/>
    <property type="evidence" value="ECO:0000318"/>
    <property type="project" value="GO_Central"/>
</dbReference>
<dbReference type="GO" id="GO:0051028">
    <property type="term" value="P:mRNA transport"/>
    <property type="evidence" value="ECO:0007669"/>
    <property type="project" value="UniProtKB-KW"/>
</dbReference>
<dbReference type="GO" id="GO:0006913">
    <property type="term" value="P:nucleocytoplasmic transport"/>
    <property type="evidence" value="ECO:0000303"/>
    <property type="project" value="ComplexPortal"/>
</dbReference>
<dbReference type="GO" id="GO:0006606">
    <property type="term" value="P:protein import into nucleus"/>
    <property type="evidence" value="ECO:0000315"/>
    <property type="project" value="UniProtKB"/>
</dbReference>
<dbReference type="GO" id="GO:0006405">
    <property type="term" value="P:RNA export from nucleus"/>
    <property type="evidence" value="ECO:0000318"/>
    <property type="project" value="GO_Central"/>
</dbReference>
<dbReference type="InterPro" id="IPR016024">
    <property type="entry name" value="ARM-type_fold"/>
</dbReference>
<dbReference type="InterPro" id="IPR018864">
    <property type="entry name" value="Nucleoporin_Nup188_N"/>
</dbReference>
<dbReference type="InterPro" id="IPR044840">
    <property type="entry name" value="Nup188"/>
</dbReference>
<dbReference type="InterPro" id="IPR048883">
    <property type="entry name" value="Nup188_N-subdom_III"/>
</dbReference>
<dbReference type="PANTHER" id="PTHR31431:SF1">
    <property type="entry name" value="NUCLEOPORIN NUP188"/>
    <property type="match status" value="1"/>
</dbReference>
<dbReference type="PANTHER" id="PTHR31431">
    <property type="entry name" value="NUCLEOPORIN NUP188 HOMOLOG"/>
    <property type="match status" value="1"/>
</dbReference>
<dbReference type="Pfam" id="PF10487">
    <property type="entry name" value="Nup188_N"/>
    <property type="match status" value="1"/>
</dbReference>
<dbReference type="Pfam" id="PF21093">
    <property type="entry name" value="Nup188_N-subdom_III"/>
    <property type="match status" value="1"/>
</dbReference>
<dbReference type="Pfam" id="PF21094">
    <property type="entry name" value="Nup188_SH3-like"/>
    <property type="match status" value="1"/>
</dbReference>
<dbReference type="SUPFAM" id="SSF48371">
    <property type="entry name" value="ARM repeat"/>
    <property type="match status" value="1"/>
</dbReference>
<name>NU188_HUMAN</name>
<proteinExistence type="evidence at protein level"/>
<evidence type="ECO:0000256" key="1">
    <source>
        <dbReference type="SAM" id="MobiDB-lite"/>
    </source>
</evidence>
<evidence type="ECO:0000269" key="2">
    <source>
    </source>
</evidence>
<evidence type="ECO:0000269" key="3">
    <source>
    </source>
</evidence>
<evidence type="ECO:0000269" key="4">
    <source>
    </source>
</evidence>
<evidence type="ECO:0000269" key="5">
    <source>
    </source>
</evidence>
<evidence type="ECO:0000303" key="6">
    <source>
    </source>
</evidence>
<evidence type="ECO:0000305" key="7"/>
<evidence type="ECO:0000305" key="8">
    <source>
    </source>
</evidence>
<evidence type="ECO:0007744" key="9">
    <source>
    </source>
</evidence>
<evidence type="ECO:0007744" key="10">
    <source>
    </source>
</evidence>
<evidence type="ECO:0007744" key="11">
    <source>
    </source>
</evidence>
<evidence type="ECO:0007744" key="12">
    <source>
    </source>
</evidence>
<evidence type="ECO:0007744" key="13">
    <source>
    </source>
</evidence>
<evidence type="ECO:0007744" key="14">
    <source>
    </source>
</evidence>
<evidence type="ECO:0007744" key="15">
    <source>
    </source>
</evidence>
<evidence type="ECO:0007744" key="16">
    <source>
    </source>
</evidence>
<evidence type="ECO:0007744" key="17">
    <source>
    </source>
</evidence>
<accession>Q5SRE5</accession>
<accession>Q14675</accession>
<accession>Q2TA87</accession>
<accession>Q7Z3K8</accession>
<accession>Q8IWF1</accession>
<protein>
    <recommendedName>
        <fullName evidence="7">Nucleoporin NUP188</fullName>
        <shortName>hNup188</shortName>
    </recommendedName>
</protein>